<gene>
    <name evidence="1" type="primary">dxs</name>
    <name type="ordered locus">PFLU_5462</name>
</gene>
<feature type="chain" id="PRO_1000205073" description="1-deoxy-D-xylulose-5-phosphate synthase">
    <location>
        <begin position="1"/>
        <end position="632"/>
    </location>
</feature>
<feature type="binding site" evidence="1">
    <location>
        <position position="87"/>
    </location>
    <ligand>
        <name>thiamine diphosphate</name>
        <dbReference type="ChEBI" id="CHEBI:58937"/>
    </ligand>
</feature>
<feature type="binding site" evidence="1">
    <location>
        <begin position="128"/>
        <end position="130"/>
    </location>
    <ligand>
        <name>thiamine diphosphate</name>
        <dbReference type="ChEBI" id="CHEBI:58937"/>
    </ligand>
</feature>
<feature type="binding site" evidence="1">
    <location>
        <position position="159"/>
    </location>
    <ligand>
        <name>Mg(2+)</name>
        <dbReference type="ChEBI" id="CHEBI:18420"/>
    </ligand>
</feature>
<feature type="binding site" evidence="1">
    <location>
        <begin position="160"/>
        <end position="161"/>
    </location>
    <ligand>
        <name>thiamine diphosphate</name>
        <dbReference type="ChEBI" id="CHEBI:58937"/>
    </ligand>
</feature>
<feature type="binding site" evidence="1">
    <location>
        <position position="188"/>
    </location>
    <ligand>
        <name>Mg(2+)</name>
        <dbReference type="ChEBI" id="CHEBI:18420"/>
    </ligand>
</feature>
<feature type="binding site" evidence="1">
    <location>
        <position position="188"/>
    </location>
    <ligand>
        <name>thiamine diphosphate</name>
        <dbReference type="ChEBI" id="CHEBI:58937"/>
    </ligand>
</feature>
<feature type="binding site" evidence="1">
    <location>
        <position position="295"/>
    </location>
    <ligand>
        <name>thiamine diphosphate</name>
        <dbReference type="ChEBI" id="CHEBI:58937"/>
    </ligand>
</feature>
<feature type="binding site" evidence="1">
    <location>
        <position position="378"/>
    </location>
    <ligand>
        <name>thiamine diphosphate</name>
        <dbReference type="ChEBI" id="CHEBI:58937"/>
    </ligand>
</feature>
<name>DXS_PSEFS</name>
<dbReference type="EC" id="2.2.1.7" evidence="1"/>
<dbReference type="EMBL" id="AM181176">
    <property type="protein sequence ID" value="CAY52664.1"/>
    <property type="molecule type" value="Genomic_DNA"/>
</dbReference>
<dbReference type="RefSeq" id="WP_015886097.1">
    <property type="nucleotide sequence ID" value="NC_012660.1"/>
</dbReference>
<dbReference type="SMR" id="C3K2R1"/>
<dbReference type="STRING" id="294.SRM1_05099"/>
<dbReference type="PATRIC" id="fig|216595.4.peg.5586"/>
<dbReference type="eggNOG" id="COG1154">
    <property type="taxonomic scope" value="Bacteria"/>
</dbReference>
<dbReference type="HOGENOM" id="CLU_009227_1_4_6"/>
<dbReference type="OrthoDB" id="9803371at2"/>
<dbReference type="UniPathway" id="UPA00064">
    <property type="reaction ID" value="UER00091"/>
</dbReference>
<dbReference type="GO" id="GO:0005829">
    <property type="term" value="C:cytosol"/>
    <property type="evidence" value="ECO:0007669"/>
    <property type="project" value="TreeGrafter"/>
</dbReference>
<dbReference type="GO" id="GO:0008661">
    <property type="term" value="F:1-deoxy-D-xylulose-5-phosphate synthase activity"/>
    <property type="evidence" value="ECO:0007669"/>
    <property type="project" value="UniProtKB-UniRule"/>
</dbReference>
<dbReference type="GO" id="GO:0000287">
    <property type="term" value="F:magnesium ion binding"/>
    <property type="evidence" value="ECO:0007669"/>
    <property type="project" value="UniProtKB-UniRule"/>
</dbReference>
<dbReference type="GO" id="GO:0030976">
    <property type="term" value="F:thiamine pyrophosphate binding"/>
    <property type="evidence" value="ECO:0007669"/>
    <property type="project" value="UniProtKB-UniRule"/>
</dbReference>
<dbReference type="GO" id="GO:0052865">
    <property type="term" value="P:1-deoxy-D-xylulose 5-phosphate biosynthetic process"/>
    <property type="evidence" value="ECO:0007669"/>
    <property type="project" value="UniProtKB-UniPathway"/>
</dbReference>
<dbReference type="GO" id="GO:0019288">
    <property type="term" value="P:isopentenyl diphosphate biosynthetic process, methylerythritol 4-phosphate pathway"/>
    <property type="evidence" value="ECO:0007669"/>
    <property type="project" value="TreeGrafter"/>
</dbReference>
<dbReference type="GO" id="GO:0016114">
    <property type="term" value="P:terpenoid biosynthetic process"/>
    <property type="evidence" value="ECO:0007669"/>
    <property type="project" value="UniProtKB-UniRule"/>
</dbReference>
<dbReference type="GO" id="GO:0009228">
    <property type="term" value="P:thiamine biosynthetic process"/>
    <property type="evidence" value="ECO:0007669"/>
    <property type="project" value="UniProtKB-UniRule"/>
</dbReference>
<dbReference type="CDD" id="cd02007">
    <property type="entry name" value="TPP_DXS"/>
    <property type="match status" value="1"/>
</dbReference>
<dbReference type="CDD" id="cd07033">
    <property type="entry name" value="TPP_PYR_DXS_TK_like"/>
    <property type="match status" value="1"/>
</dbReference>
<dbReference type="FunFam" id="3.40.50.920:FF:000002">
    <property type="entry name" value="1-deoxy-D-xylulose-5-phosphate synthase"/>
    <property type="match status" value="1"/>
</dbReference>
<dbReference type="FunFam" id="3.40.50.970:FF:000005">
    <property type="entry name" value="1-deoxy-D-xylulose-5-phosphate synthase"/>
    <property type="match status" value="1"/>
</dbReference>
<dbReference type="Gene3D" id="3.40.50.920">
    <property type="match status" value="1"/>
</dbReference>
<dbReference type="Gene3D" id="3.40.50.970">
    <property type="match status" value="2"/>
</dbReference>
<dbReference type="HAMAP" id="MF_00315">
    <property type="entry name" value="DXP_synth"/>
    <property type="match status" value="1"/>
</dbReference>
<dbReference type="InterPro" id="IPR005477">
    <property type="entry name" value="Dxylulose-5-P_synthase"/>
</dbReference>
<dbReference type="InterPro" id="IPR029061">
    <property type="entry name" value="THDP-binding"/>
</dbReference>
<dbReference type="InterPro" id="IPR009014">
    <property type="entry name" value="Transketo_C/PFOR_II"/>
</dbReference>
<dbReference type="InterPro" id="IPR005475">
    <property type="entry name" value="Transketolase-like_Pyr-bd"/>
</dbReference>
<dbReference type="InterPro" id="IPR020826">
    <property type="entry name" value="Transketolase_BS"/>
</dbReference>
<dbReference type="InterPro" id="IPR033248">
    <property type="entry name" value="Transketolase_C"/>
</dbReference>
<dbReference type="NCBIfam" id="TIGR00204">
    <property type="entry name" value="dxs"/>
    <property type="match status" value="1"/>
</dbReference>
<dbReference type="NCBIfam" id="NF003933">
    <property type="entry name" value="PRK05444.2-2"/>
    <property type="match status" value="1"/>
</dbReference>
<dbReference type="PANTHER" id="PTHR43322">
    <property type="entry name" value="1-D-DEOXYXYLULOSE 5-PHOSPHATE SYNTHASE-RELATED"/>
    <property type="match status" value="1"/>
</dbReference>
<dbReference type="PANTHER" id="PTHR43322:SF5">
    <property type="entry name" value="1-DEOXY-D-XYLULOSE-5-PHOSPHATE SYNTHASE, CHLOROPLASTIC"/>
    <property type="match status" value="1"/>
</dbReference>
<dbReference type="Pfam" id="PF13292">
    <property type="entry name" value="DXP_synthase_N"/>
    <property type="match status" value="1"/>
</dbReference>
<dbReference type="Pfam" id="PF02779">
    <property type="entry name" value="Transket_pyr"/>
    <property type="match status" value="1"/>
</dbReference>
<dbReference type="Pfam" id="PF02780">
    <property type="entry name" value="Transketolase_C"/>
    <property type="match status" value="1"/>
</dbReference>
<dbReference type="SMART" id="SM00861">
    <property type="entry name" value="Transket_pyr"/>
    <property type="match status" value="1"/>
</dbReference>
<dbReference type="SUPFAM" id="SSF52518">
    <property type="entry name" value="Thiamin diphosphate-binding fold (THDP-binding)"/>
    <property type="match status" value="2"/>
</dbReference>
<dbReference type="SUPFAM" id="SSF52922">
    <property type="entry name" value="TK C-terminal domain-like"/>
    <property type="match status" value="1"/>
</dbReference>
<dbReference type="PROSITE" id="PS00802">
    <property type="entry name" value="TRANSKETOLASE_2"/>
    <property type="match status" value="1"/>
</dbReference>
<reference key="1">
    <citation type="journal article" date="2009" name="Genome Biol.">
        <title>Genomic and genetic analyses of diversity and plant interactions of Pseudomonas fluorescens.</title>
        <authorList>
            <person name="Silby M.W."/>
            <person name="Cerdeno-Tarraga A.M."/>
            <person name="Vernikos G.S."/>
            <person name="Giddens S.R."/>
            <person name="Jackson R.W."/>
            <person name="Preston G.M."/>
            <person name="Zhang X.-X."/>
            <person name="Moon C.D."/>
            <person name="Gehrig S.M."/>
            <person name="Godfrey S.A.C."/>
            <person name="Knight C.G."/>
            <person name="Malone J.G."/>
            <person name="Robinson Z."/>
            <person name="Spiers A.J."/>
            <person name="Harris S."/>
            <person name="Challis G.L."/>
            <person name="Yaxley A.M."/>
            <person name="Harris D."/>
            <person name="Seeger K."/>
            <person name="Murphy L."/>
            <person name="Rutter S."/>
            <person name="Squares R."/>
            <person name="Quail M.A."/>
            <person name="Saunders E."/>
            <person name="Mavromatis K."/>
            <person name="Brettin T.S."/>
            <person name="Bentley S.D."/>
            <person name="Hothersall J."/>
            <person name="Stephens E."/>
            <person name="Thomas C.M."/>
            <person name="Parkhill J."/>
            <person name="Levy S.B."/>
            <person name="Rainey P.B."/>
            <person name="Thomson N.R."/>
        </authorList>
    </citation>
    <scope>NUCLEOTIDE SEQUENCE [LARGE SCALE GENOMIC DNA]</scope>
    <source>
        <strain>SBW25</strain>
    </source>
</reference>
<proteinExistence type="inferred from homology"/>
<accession>C3K2R1</accession>
<sequence>MPTTFQEIPRKRPSTPLLDRAVTPVGLRRLGEAELETLADELRLELLYTVGQTGGHFGAGLGVIELTIALHYVFDTPDDRLVWDVGHQAYPHKILTGRREQMGTLRQKDGIAAFPRRAESEYDTFGVGHSSTSISAALGMAIAARLQGSDRKAIAVIGDGALTAGMAFEALNHAPEVDANMLVILNDNDMSISRNVGGLSNYLAKILSSRTYASMREGSKKVLSRLPGAWEIARRTEEYAKGMLVPGTLFEELGWNYIGPIDGHDLPTLIATLRNMRDLKGPQFLHIVTKKGKGFAPAEVDPIGYHAITKLDPLNAPAAAPKKASGPKYSGVFGEWLCDMAAADPRLVGITPAMKEGSDLVAFSERFPLRYFDVAIAEQHAVTFAAGMACEGAKPVVAIYSTFLQRGYDQLVHDVAVQNLDVLFAIDRAGLVGEDGPTHAGSFDLSYLRCIPGMLVMTPSDENELRKMLSTGHLYNGPAAVRYPRGNGPNAVIEKDLEPIEIGKGIVRRQGSKTAFLVFGVQLAEALKVAEKIDATVVDMRFVKPLDEALVREIAGGHELLVTVEENAIMGGAGAAVSEFLARENILKSVLHLGLPDVYVEHAKPAQMLAECGLDEAGIEASVRERMTLLAL</sequence>
<comment type="function">
    <text evidence="1">Catalyzes the acyloin condensation reaction between C atoms 2 and 3 of pyruvate and glyceraldehyde 3-phosphate to yield 1-deoxy-D-xylulose-5-phosphate (DXP).</text>
</comment>
<comment type="catalytic activity">
    <reaction evidence="1">
        <text>D-glyceraldehyde 3-phosphate + pyruvate + H(+) = 1-deoxy-D-xylulose 5-phosphate + CO2</text>
        <dbReference type="Rhea" id="RHEA:12605"/>
        <dbReference type="ChEBI" id="CHEBI:15361"/>
        <dbReference type="ChEBI" id="CHEBI:15378"/>
        <dbReference type="ChEBI" id="CHEBI:16526"/>
        <dbReference type="ChEBI" id="CHEBI:57792"/>
        <dbReference type="ChEBI" id="CHEBI:59776"/>
        <dbReference type="EC" id="2.2.1.7"/>
    </reaction>
</comment>
<comment type="cofactor">
    <cofactor evidence="1">
        <name>Mg(2+)</name>
        <dbReference type="ChEBI" id="CHEBI:18420"/>
    </cofactor>
    <text evidence="1">Binds 1 Mg(2+) ion per subunit.</text>
</comment>
<comment type="cofactor">
    <cofactor evidence="1">
        <name>thiamine diphosphate</name>
        <dbReference type="ChEBI" id="CHEBI:58937"/>
    </cofactor>
    <text evidence="1">Binds 1 thiamine pyrophosphate per subunit.</text>
</comment>
<comment type="pathway">
    <text evidence="1">Metabolic intermediate biosynthesis; 1-deoxy-D-xylulose 5-phosphate biosynthesis; 1-deoxy-D-xylulose 5-phosphate from D-glyceraldehyde 3-phosphate and pyruvate: step 1/1.</text>
</comment>
<comment type="subunit">
    <text evidence="1">Homodimer.</text>
</comment>
<comment type="similarity">
    <text evidence="1">Belongs to the transketolase family. DXPS subfamily.</text>
</comment>
<protein>
    <recommendedName>
        <fullName evidence="1">1-deoxy-D-xylulose-5-phosphate synthase</fullName>
        <ecNumber evidence="1">2.2.1.7</ecNumber>
    </recommendedName>
    <alternativeName>
        <fullName evidence="1">1-deoxyxylulose-5-phosphate synthase</fullName>
        <shortName evidence="1">DXP synthase</shortName>
        <shortName evidence="1">DXPS</shortName>
    </alternativeName>
</protein>
<evidence type="ECO:0000255" key="1">
    <source>
        <dbReference type="HAMAP-Rule" id="MF_00315"/>
    </source>
</evidence>
<keyword id="KW-0414">Isoprene biosynthesis</keyword>
<keyword id="KW-0460">Magnesium</keyword>
<keyword id="KW-0479">Metal-binding</keyword>
<keyword id="KW-0784">Thiamine biosynthesis</keyword>
<keyword id="KW-0786">Thiamine pyrophosphate</keyword>
<keyword id="KW-0808">Transferase</keyword>
<organism>
    <name type="scientific">Pseudomonas fluorescens (strain SBW25)</name>
    <dbReference type="NCBI Taxonomy" id="216595"/>
    <lineage>
        <taxon>Bacteria</taxon>
        <taxon>Pseudomonadati</taxon>
        <taxon>Pseudomonadota</taxon>
        <taxon>Gammaproteobacteria</taxon>
        <taxon>Pseudomonadales</taxon>
        <taxon>Pseudomonadaceae</taxon>
        <taxon>Pseudomonas</taxon>
    </lineage>
</organism>